<comment type="function">
    <text evidence="1">Aspartyl-tRNA synthetase with relaxed tRNA specificity since it is able to aspartylate not only its cognate tRNA(Asp) but also tRNA(Asn). Reaction proceeds in two steps: L-aspartate is first activated by ATP to form Asp-AMP and then transferred to the acceptor end of tRNA(Asp/Asn).</text>
</comment>
<comment type="catalytic activity">
    <reaction evidence="1">
        <text>tRNA(Asx) + L-aspartate + ATP = L-aspartyl-tRNA(Asx) + AMP + diphosphate</text>
        <dbReference type="Rhea" id="RHEA:18349"/>
        <dbReference type="Rhea" id="RHEA-COMP:9710"/>
        <dbReference type="Rhea" id="RHEA-COMP:9711"/>
        <dbReference type="ChEBI" id="CHEBI:29991"/>
        <dbReference type="ChEBI" id="CHEBI:30616"/>
        <dbReference type="ChEBI" id="CHEBI:33019"/>
        <dbReference type="ChEBI" id="CHEBI:78442"/>
        <dbReference type="ChEBI" id="CHEBI:78516"/>
        <dbReference type="ChEBI" id="CHEBI:456215"/>
        <dbReference type="EC" id="6.1.1.23"/>
    </reaction>
</comment>
<comment type="subunit">
    <text evidence="1">Homodimer.</text>
</comment>
<comment type="subcellular location">
    <subcellularLocation>
        <location evidence="1">Cytoplasm</location>
    </subcellularLocation>
</comment>
<comment type="similarity">
    <text evidence="1">Belongs to the class-II aminoacyl-tRNA synthetase family. Type 1 subfamily.</text>
</comment>
<sequence length="602" mass="68077">MSSMRTHYCGLVTEQFSGQEVALTGWVQRRRDHGGVIFIDLRDREGLVQVVCDPDRPEMFKAAEEIRNEFCIRVTGKVRPRPAGTENANLTSGKIEVLCHELTVLNPSVTPPFQLDDDNLSETTRLTHRVLDLRRPQMQYNLRLRYKVAMEVRKFLDAQGFIDIETPMLGKSTPEGARDYLVPSRVNPGHFFALPQSPQIFKQMLMVSGFDRYYQITKCFRDEDLRADRQPEFTQIDCETSFLTEQEIRDLFEDMMRTVFKNAIDVDLDARFPVMEFREAMARFGSDKPDLRVKLEFTELTEVMKDVDFKVFSSPANSDNGRVVGLRVPGGGAISRGEIDAYTQFVGIYGAKGLAWIKVNEVAKGRDGLQSPIVKNLHDAAIAEILKRTGAQDGDIIFFGADKAKVVNDSIGALRLKIGHSDFGKANGLFEDTWKPLWVVDFPMFEYDEEDARWVAMHHPFTSPKDEHLEYLETDPGKCLAKAYDMVLNGWEMGGGSVRIFRSDIQSKVFRALNINDDEARAKFGYLLDALQYGAPPHGGLAFGLDRIVTMMAGADSIRDVIAFPKTQRAQDLLTQAPSSVDEKQLRELHIRLRATEPKPTA</sequence>
<keyword id="KW-0030">Aminoacyl-tRNA synthetase</keyword>
<keyword id="KW-0067">ATP-binding</keyword>
<keyword id="KW-0963">Cytoplasm</keyword>
<keyword id="KW-0436">Ligase</keyword>
<keyword id="KW-0547">Nucleotide-binding</keyword>
<keyword id="KW-0648">Protein biosynthesis</keyword>
<keyword id="KW-1185">Reference proteome</keyword>
<proteinExistence type="inferred from homology"/>
<evidence type="ECO:0000255" key="1">
    <source>
        <dbReference type="HAMAP-Rule" id="MF_00044"/>
    </source>
</evidence>
<protein>
    <recommendedName>
        <fullName evidence="1">Aspartate--tRNA(Asp/Asn) ligase</fullName>
        <ecNumber evidence="1">6.1.1.23</ecNumber>
    </recommendedName>
    <alternativeName>
        <fullName evidence="1">Aspartyl-tRNA synthetase</fullName>
        <shortName evidence="1">AspRS</shortName>
    </alternativeName>
    <alternativeName>
        <fullName evidence="1">Non-discriminating aspartyl-tRNA synthetase</fullName>
        <shortName evidence="1">ND-AspRS</shortName>
    </alternativeName>
</protein>
<organism>
    <name type="scientific">Cupriavidus necator (strain ATCC 17699 / DSM 428 / KCTC 22496 / NCIMB 10442 / H16 / Stanier 337)</name>
    <name type="common">Ralstonia eutropha</name>
    <dbReference type="NCBI Taxonomy" id="381666"/>
    <lineage>
        <taxon>Bacteria</taxon>
        <taxon>Pseudomonadati</taxon>
        <taxon>Pseudomonadota</taxon>
        <taxon>Betaproteobacteria</taxon>
        <taxon>Burkholderiales</taxon>
        <taxon>Burkholderiaceae</taxon>
        <taxon>Cupriavidus</taxon>
    </lineage>
</organism>
<feature type="chain" id="PRO_1000006734" description="Aspartate--tRNA(Asp/Asn) ligase">
    <location>
        <begin position="1"/>
        <end position="602"/>
    </location>
</feature>
<feature type="region of interest" description="Aspartate" evidence="1">
    <location>
        <begin position="199"/>
        <end position="202"/>
    </location>
</feature>
<feature type="binding site" evidence="1">
    <location>
        <position position="175"/>
    </location>
    <ligand>
        <name>L-aspartate</name>
        <dbReference type="ChEBI" id="CHEBI:29991"/>
    </ligand>
</feature>
<feature type="binding site" evidence="1">
    <location>
        <begin position="221"/>
        <end position="223"/>
    </location>
    <ligand>
        <name>ATP</name>
        <dbReference type="ChEBI" id="CHEBI:30616"/>
    </ligand>
</feature>
<feature type="binding site" evidence="1">
    <location>
        <position position="221"/>
    </location>
    <ligand>
        <name>L-aspartate</name>
        <dbReference type="ChEBI" id="CHEBI:29991"/>
    </ligand>
</feature>
<feature type="binding site" evidence="1">
    <location>
        <position position="230"/>
    </location>
    <ligand>
        <name>ATP</name>
        <dbReference type="ChEBI" id="CHEBI:30616"/>
    </ligand>
</feature>
<feature type="binding site" evidence="1">
    <location>
        <position position="458"/>
    </location>
    <ligand>
        <name>L-aspartate</name>
        <dbReference type="ChEBI" id="CHEBI:29991"/>
    </ligand>
</feature>
<feature type="binding site" evidence="1">
    <location>
        <position position="492"/>
    </location>
    <ligand>
        <name>ATP</name>
        <dbReference type="ChEBI" id="CHEBI:30616"/>
    </ligand>
</feature>
<feature type="binding site" evidence="1">
    <location>
        <position position="499"/>
    </location>
    <ligand>
        <name>L-aspartate</name>
        <dbReference type="ChEBI" id="CHEBI:29991"/>
    </ligand>
</feature>
<feature type="binding site" evidence="1">
    <location>
        <begin position="544"/>
        <end position="547"/>
    </location>
    <ligand>
        <name>ATP</name>
        <dbReference type="ChEBI" id="CHEBI:30616"/>
    </ligand>
</feature>
<feature type="site" description="Important for tRNA non-discrimination" evidence="1">
    <location>
        <position position="33"/>
    </location>
</feature>
<feature type="site" description="Important for tRNA non-discrimination" evidence="1">
    <location>
        <position position="84"/>
    </location>
</feature>
<dbReference type="EC" id="6.1.1.23" evidence="1"/>
<dbReference type="EMBL" id="AM260479">
    <property type="protein sequence ID" value="CAJ91603.1"/>
    <property type="molecule type" value="Genomic_DNA"/>
</dbReference>
<dbReference type="RefSeq" id="WP_011614526.1">
    <property type="nucleotide sequence ID" value="NZ_CP039287.1"/>
</dbReference>
<dbReference type="SMR" id="Q0KEG8"/>
<dbReference type="STRING" id="381666.H16_A0453"/>
<dbReference type="KEGG" id="reh:H16_A0453"/>
<dbReference type="PATRIC" id="fig|381666.6.peg.816"/>
<dbReference type="eggNOG" id="COG0173">
    <property type="taxonomic scope" value="Bacteria"/>
</dbReference>
<dbReference type="HOGENOM" id="CLU_014330_3_2_4"/>
<dbReference type="OrthoDB" id="9802326at2"/>
<dbReference type="Proteomes" id="UP000008210">
    <property type="component" value="Chromosome 1"/>
</dbReference>
<dbReference type="GO" id="GO:0005737">
    <property type="term" value="C:cytoplasm"/>
    <property type="evidence" value="ECO:0007669"/>
    <property type="project" value="UniProtKB-SubCell"/>
</dbReference>
<dbReference type="GO" id="GO:0004815">
    <property type="term" value="F:aspartate-tRNA ligase activity"/>
    <property type="evidence" value="ECO:0007669"/>
    <property type="project" value="UniProtKB-UniRule"/>
</dbReference>
<dbReference type="GO" id="GO:0050560">
    <property type="term" value="F:aspartate-tRNA(Asn) ligase activity"/>
    <property type="evidence" value="ECO:0007669"/>
    <property type="project" value="UniProtKB-EC"/>
</dbReference>
<dbReference type="GO" id="GO:0005524">
    <property type="term" value="F:ATP binding"/>
    <property type="evidence" value="ECO:0007669"/>
    <property type="project" value="UniProtKB-UniRule"/>
</dbReference>
<dbReference type="GO" id="GO:0003676">
    <property type="term" value="F:nucleic acid binding"/>
    <property type="evidence" value="ECO:0007669"/>
    <property type="project" value="InterPro"/>
</dbReference>
<dbReference type="GO" id="GO:0006422">
    <property type="term" value="P:aspartyl-tRNA aminoacylation"/>
    <property type="evidence" value="ECO:0007669"/>
    <property type="project" value="UniProtKB-UniRule"/>
</dbReference>
<dbReference type="CDD" id="cd00777">
    <property type="entry name" value="AspRS_core"/>
    <property type="match status" value="1"/>
</dbReference>
<dbReference type="CDD" id="cd04317">
    <property type="entry name" value="EcAspRS_like_N"/>
    <property type="match status" value="1"/>
</dbReference>
<dbReference type="Gene3D" id="3.30.930.10">
    <property type="entry name" value="Bira Bifunctional Protein, Domain 2"/>
    <property type="match status" value="1"/>
</dbReference>
<dbReference type="Gene3D" id="3.30.1360.30">
    <property type="entry name" value="GAD-like domain"/>
    <property type="match status" value="1"/>
</dbReference>
<dbReference type="Gene3D" id="2.40.50.140">
    <property type="entry name" value="Nucleic acid-binding proteins"/>
    <property type="match status" value="1"/>
</dbReference>
<dbReference type="HAMAP" id="MF_00044">
    <property type="entry name" value="Asp_tRNA_synth_type1"/>
    <property type="match status" value="1"/>
</dbReference>
<dbReference type="InterPro" id="IPR004364">
    <property type="entry name" value="Aa-tRNA-synt_II"/>
</dbReference>
<dbReference type="InterPro" id="IPR006195">
    <property type="entry name" value="aa-tRNA-synth_II"/>
</dbReference>
<dbReference type="InterPro" id="IPR045864">
    <property type="entry name" value="aa-tRNA-synth_II/BPL/LPL"/>
</dbReference>
<dbReference type="InterPro" id="IPR004524">
    <property type="entry name" value="Asp-tRNA-ligase_1"/>
</dbReference>
<dbReference type="InterPro" id="IPR047089">
    <property type="entry name" value="Asp-tRNA-ligase_1_N"/>
</dbReference>
<dbReference type="InterPro" id="IPR002312">
    <property type="entry name" value="Asp/Asn-tRNA-synth_IIb"/>
</dbReference>
<dbReference type="InterPro" id="IPR047090">
    <property type="entry name" value="AspRS_core"/>
</dbReference>
<dbReference type="InterPro" id="IPR004115">
    <property type="entry name" value="GAD-like_sf"/>
</dbReference>
<dbReference type="InterPro" id="IPR029351">
    <property type="entry name" value="GAD_dom"/>
</dbReference>
<dbReference type="InterPro" id="IPR012340">
    <property type="entry name" value="NA-bd_OB-fold"/>
</dbReference>
<dbReference type="InterPro" id="IPR004365">
    <property type="entry name" value="NA-bd_OB_tRNA"/>
</dbReference>
<dbReference type="NCBIfam" id="TIGR00459">
    <property type="entry name" value="aspS_bact"/>
    <property type="match status" value="1"/>
</dbReference>
<dbReference type="NCBIfam" id="NF001750">
    <property type="entry name" value="PRK00476.1"/>
    <property type="match status" value="1"/>
</dbReference>
<dbReference type="PANTHER" id="PTHR22594:SF5">
    <property type="entry name" value="ASPARTATE--TRNA LIGASE, MITOCHONDRIAL"/>
    <property type="match status" value="1"/>
</dbReference>
<dbReference type="PANTHER" id="PTHR22594">
    <property type="entry name" value="ASPARTYL/LYSYL-TRNA SYNTHETASE"/>
    <property type="match status" value="1"/>
</dbReference>
<dbReference type="Pfam" id="PF02938">
    <property type="entry name" value="GAD"/>
    <property type="match status" value="1"/>
</dbReference>
<dbReference type="Pfam" id="PF00152">
    <property type="entry name" value="tRNA-synt_2"/>
    <property type="match status" value="1"/>
</dbReference>
<dbReference type="Pfam" id="PF01336">
    <property type="entry name" value="tRNA_anti-codon"/>
    <property type="match status" value="1"/>
</dbReference>
<dbReference type="PRINTS" id="PR01042">
    <property type="entry name" value="TRNASYNTHASP"/>
</dbReference>
<dbReference type="SUPFAM" id="SSF55681">
    <property type="entry name" value="Class II aaRS and biotin synthetases"/>
    <property type="match status" value="1"/>
</dbReference>
<dbReference type="SUPFAM" id="SSF55261">
    <property type="entry name" value="GAD domain-like"/>
    <property type="match status" value="1"/>
</dbReference>
<dbReference type="SUPFAM" id="SSF50249">
    <property type="entry name" value="Nucleic acid-binding proteins"/>
    <property type="match status" value="1"/>
</dbReference>
<dbReference type="PROSITE" id="PS50862">
    <property type="entry name" value="AA_TRNA_LIGASE_II"/>
    <property type="match status" value="1"/>
</dbReference>
<name>SYDND_CUPNH</name>
<gene>
    <name evidence="1" type="primary">aspS</name>
    <name type="ordered locus">H16_A0453</name>
</gene>
<reference key="1">
    <citation type="journal article" date="2006" name="Nat. Biotechnol.">
        <title>Genome sequence of the bioplastic-producing 'Knallgas' bacterium Ralstonia eutropha H16.</title>
        <authorList>
            <person name="Pohlmann A."/>
            <person name="Fricke W.F."/>
            <person name="Reinecke F."/>
            <person name="Kusian B."/>
            <person name="Liesegang H."/>
            <person name="Cramm R."/>
            <person name="Eitinger T."/>
            <person name="Ewering C."/>
            <person name="Poetter M."/>
            <person name="Schwartz E."/>
            <person name="Strittmatter A."/>
            <person name="Voss I."/>
            <person name="Gottschalk G."/>
            <person name="Steinbuechel A."/>
            <person name="Friedrich B."/>
            <person name="Bowien B."/>
        </authorList>
    </citation>
    <scope>NUCLEOTIDE SEQUENCE [LARGE SCALE GENOMIC DNA]</scope>
    <source>
        <strain>ATCC 17699 / DSM 428 / KCTC 22496 / NCIMB 10442 / H16 / Stanier 337</strain>
    </source>
</reference>
<accession>Q0KEG8</accession>